<name>Y1584_LISIN</name>
<keyword id="KW-0378">Hydrolase</keyword>
<keyword id="KW-0479">Metal-binding</keyword>
<keyword id="KW-0482">Metalloprotease</keyword>
<keyword id="KW-0645">Protease</keyword>
<keyword id="KW-0862">Zinc</keyword>
<proteinExistence type="inferred from homology"/>
<accession>Q92BG5</accession>
<sequence>MLVNEISENEKPREKLQNYGIEALSTSELVALIIETGTKTESVLTIANRIMMKFKHIAEMQYASIEEFQLVNGIGIAKASKIMAAVELGKRISLVTEQKEIVIRCPEDAVKLVMPELAFLFQEHFHCIFLNTKNQVIYRQTIFVGGLNASIVHPREVFRLALRKSSASIMCFHNHPSGDPAPSSEDLLVTKRLAEAGNIVGITLLDHIIIGKNKYISLKEKGYF</sequence>
<feature type="chain" id="PRO_0000190707" description="UPF0758 protein lin1584">
    <location>
        <begin position="1"/>
        <end position="224"/>
    </location>
</feature>
<feature type="domain" description="MPN" evidence="1">
    <location>
        <begin position="102"/>
        <end position="224"/>
    </location>
</feature>
<feature type="short sequence motif" description="JAMM motif" evidence="1">
    <location>
        <begin position="173"/>
        <end position="186"/>
    </location>
</feature>
<feature type="binding site" evidence="1">
    <location>
        <position position="173"/>
    </location>
    <ligand>
        <name>Zn(2+)</name>
        <dbReference type="ChEBI" id="CHEBI:29105"/>
        <note>catalytic</note>
    </ligand>
</feature>
<feature type="binding site" evidence="1">
    <location>
        <position position="175"/>
    </location>
    <ligand>
        <name>Zn(2+)</name>
        <dbReference type="ChEBI" id="CHEBI:29105"/>
        <note>catalytic</note>
    </ligand>
</feature>
<feature type="binding site" evidence="1">
    <location>
        <position position="186"/>
    </location>
    <ligand>
        <name>Zn(2+)</name>
        <dbReference type="ChEBI" id="CHEBI:29105"/>
        <note>catalytic</note>
    </ligand>
</feature>
<gene>
    <name type="ordered locus">lin1584</name>
</gene>
<dbReference type="EMBL" id="AL596169">
    <property type="protein sequence ID" value="CAC96815.1"/>
    <property type="molecule type" value="Genomic_DNA"/>
</dbReference>
<dbReference type="PIR" id="AG1630">
    <property type="entry name" value="AG1630"/>
</dbReference>
<dbReference type="RefSeq" id="WP_003762424.1">
    <property type="nucleotide sequence ID" value="NC_003212.1"/>
</dbReference>
<dbReference type="SMR" id="Q92BG5"/>
<dbReference type="STRING" id="272626.gene:17565915"/>
<dbReference type="GeneID" id="93234966"/>
<dbReference type="KEGG" id="lin:lin1584"/>
<dbReference type="eggNOG" id="COG2003">
    <property type="taxonomic scope" value="Bacteria"/>
</dbReference>
<dbReference type="HOGENOM" id="CLU_073529_0_2_9"/>
<dbReference type="OrthoDB" id="9804482at2"/>
<dbReference type="Proteomes" id="UP000002513">
    <property type="component" value="Chromosome"/>
</dbReference>
<dbReference type="GO" id="GO:0046872">
    <property type="term" value="F:metal ion binding"/>
    <property type="evidence" value="ECO:0007669"/>
    <property type="project" value="UniProtKB-KW"/>
</dbReference>
<dbReference type="GO" id="GO:0008237">
    <property type="term" value="F:metallopeptidase activity"/>
    <property type="evidence" value="ECO:0007669"/>
    <property type="project" value="UniProtKB-KW"/>
</dbReference>
<dbReference type="GO" id="GO:0006508">
    <property type="term" value="P:proteolysis"/>
    <property type="evidence" value="ECO:0007669"/>
    <property type="project" value="UniProtKB-KW"/>
</dbReference>
<dbReference type="CDD" id="cd08071">
    <property type="entry name" value="MPN_DUF2466"/>
    <property type="match status" value="1"/>
</dbReference>
<dbReference type="Gene3D" id="1.10.150.20">
    <property type="entry name" value="5' to 3' exonuclease, C-terminal subdomain"/>
    <property type="match status" value="1"/>
</dbReference>
<dbReference type="Gene3D" id="3.40.140.10">
    <property type="entry name" value="Cytidine Deaminase, domain 2"/>
    <property type="match status" value="1"/>
</dbReference>
<dbReference type="InterPro" id="IPR037518">
    <property type="entry name" value="MPN"/>
</dbReference>
<dbReference type="InterPro" id="IPR025657">
    <property type="entry name" value="RadC_JAB"/>
</dbReference>
<dbReference type="InterPro" id="IPR010994">
    <property type="entry name" value="RuvA_2-like"/>
</dbReference>
<dbReference type="InterPro" id="IPR001405">
    <property type="entry name" value="UPF0758"/>
</dbReference>
<dbReference type="InterPro" id="IPR020891">
    <property type="entry name" value="UPF0758_CS"/>
</dbReference>
<dbReference type="InterPro" id="IPR046778">
    <property type="entry name" value="UPF0758_N"/>
</dbReference>
<dbReference type="NCBIfam" id="NF000642">
    <property type="entry name" value="PRK00024.1"/>
    <property type="match status" value="1"/>
</dbReference>
<dbReference type="NCBIfam" id="TIGR00608">
    <property type="entry name" value="radc"/>
    <property type="match status" value="1"/>
</dbReference>
<dbReference type="PANTHER" id="PTHR30471">
    <property type="entry name" value="DNA REPAIR PROTEIN RADC"/>
    <property type="match status" value="1"/>
</dbReference>
<dbReference type="PANTHER" id="PTHR30471:SF3">
    <property type="entry name" value="UPF0758 PROTEIN YEES-RELATED"/>
    <property type="match status" value="1"/>
</dbReference>
<dbReference type="Pfam" id="PF04002">
    <property type="entry name" value="RadC"/>
    <property type="match status" value="1"/>
</dbReference>
<dbReference type="Pfam" id="PF20582">
    <property type="entry name" value="UPF0758_N"/>
    <property type="match status" value="1"/>
</dbReference>
<dbReference type="SUPFAM" id="SSF47781">
    <property type="entry name" value="RuvA domain 2-like"/>
    <property type="match status" value="1"/>
</dbReference>
<dbReference type="PROSITE" id="PS50249">
    <property type="entry name" value="MPN"/>
    <property type="match status" value="1"/>
</dbReference>
<dbReference type="PROSITE" id="PS01302">
    <property type="entry name" value="UPF0758"/>
    <property type="match status" value="1"/>
</dbReference>
<reference key="1">
    <citation type="journal article" date="2001" name="Science">
        <title>Comparative genomics of Listeria species.</title>
        <authorList>
            <person name="Glaser P."/>
            <person name="Frangeul L."/>
            <person name="Buchrieser C."/>
            <person name="Rusniok C."/>
            <person name="Amend A."/>
            <person name="Baquero F."/>
            <person name="Berche P."/>
            <person name="Bloecker H."/>
            <person name="Brandt P."/>
            <person name="Chakraborty T."/>
            <person name="Charbit A."/>
            <person name="Chetouani F."/>
            <person name="Couve E."/>
            <person name="de Daruvar A."/>
            <person name="Dehoux P."/>
            <person name="Domann E."/>
            <person name="Dominguez-Bernal G."/>
            <person name="Duchaud E."/>
            <person name="Durant L."/>
            <person name="Dussurget O."/>
            <person name="Entian K.-D."/>
            <person name="Fsihi H."/>
            <person name="Garcia-del Portillo F."/>
            <person name="Garrido P."/>
            <person name="Gautier L."/>
            <person name="Goebel W."/>
            <person name="Gomez-Lopez N."/>
            <person name="Hain T."/>
            <person name="Hauf J."/>
            <person name="Jackson D."/>
            <person name="Jones L.-M."/>
            <person name="Kaerst U."/>
            <person name="Kreft J."/>
            <person name="Kuhn M."/>
            <person name="Kunst F."/>
            <person name="Kurapkat G."/>
            <person name="Madueno E."/>
            <person name="Maitournam A."/>
            <person name="Mata Vicente J."/>
            <person name="Ng E."/>
            <person name="Nedjari H."/>
            <person name="Nordsiek G."/>
            <person name="Novella S."/>
            <person name="de Pablos B."/>
            <person name="Perez-Diaz J.-C."/>
            <person name="Purcell R."/>
            <person name="Remmel B."/>
            <person name="Rose M."/>
            <person name="Schlueter T."/>
            <person name="Simoes N."/>
            <person name="Tierrez A."/>
            <person name="Vazquez-Boland J.-A."/>
            <person name="Voss H."/>
            <person name="Wehland J."/>
            <person name="Cossart P."/>
        </authorList>
    </citation>
    <scope>NUCLEOTIDE SEQUENCE [LARGE SCALE GENOMIC DNA]</scope>
    <source>
        <strain>ATCC BAA-680 / CLIP 11262</strain>
    </source>
</reference>
<organism>
    <name type="scientific">Listeria innocua serovar 6a (strain ATCC BAA-680 / CLIP 11262)</name>
    <dbReference type="NCBI Taxonomy" id="272626"/>
    <lineage>
        <taxon>Bacteria</taxon>
        <taxon>Bacillati</taxon>
        <taxon>Bacillota</taxon>
        <taxon>Bacilli</taxon>
        <taxon>Bacillales</taxon>
        <taxon>Listeriaceae</taxon>
        <taxon>Listeria</taxon>
    </lineage>
</organism>
<protein>
    <recommendedName>
        <fullName>UPF0758 protein lin1584</fullName>
    </recommendedName>
</protein>
<comment type="similarity">
    <text evidence="2">Belongs to the UPF0758 family.</text>
</comment>
<evidence type="ECO:0000255" key="1">
    <source>
        <dbReference type="PROSITE-ProRule" id="PRU01182"/>
    </source>
</evidence>
<evidence type="ECO:0000305" key="2"/>